<reference key="1">
    <citation type="journal article" date="2004" name="Proc. Natl. Acad. Sci. U.S.A.">
        <title>Genome sequence of the enterobacterial phytopathogen Erwinia carotovora subsp. atroseptica and characterization of virulence factors.</title>
        <authorList>
            <person name="Bell K.S."/>
            <person name="Sebaihia M."/>
            <person name="Pritchard L."/>
            <person name="Holden M.T.G."/>
            <person name="Hyman L.J."/>
            <person name="Holeva M.C."/>
            <person name="Thomson N.R."/>
            <person name="Bentley S.D."/>
            <person name="Churcher L.J.C."/>
            <person name="Mungall K."/>
            <person name="Atkin R."/>
            <person name="Bason N."/>
            <person name="Brooks K."/>
            <person name="Chillingworth T."/>
            <person name="Clark K."/>
            <person name="Doggett J."/>
            <person name="Fraser A."/>
            <person name="Hance Z."/>
            <person name="Hauser H."/>
            <person name="Jagels K."/>
            <person name="Moule S."/>
            <person name="Norbertczak H."/>
            <person name="Ormond D."/>
            <person name="Price C."/>
            <person name="Quail M.A."/>
            <person name="Sanders M."/>
            <person name="Walker D."/>
            <person name="Whitehead S."/>
            <person name="Salmond G.P.C."/>
            <person name="Birch P.R.J."/>
            <person name="Parkhill J."/>
            <person name="Toth I.K."/>
        </authorList>
    </citation>
    <scope>NUCLEOTIDE SEQUENCE [LARGE SCALE GENOMIC DNA]</scope>
    <source>
        <strain>SCRI 1043 / ATCC BAA-672</strain>
    </source>
</reference>
<accession>Q6D8E0</accession>
<protein>
    <recommendedName>
        <fullName evidence="1">Ribosome-recycling factor</fullName>
        <shortName evidence="1">RRF</shortName>
    </recommendedName>
    <alternativeName>
        <fullName evidence="1">Ribosome-releasing factor</fullName>
    </alternativeName>
</protein>
<dbReference type="EMBL" id="BX950851">
    <property type="protein sequence ID" value="CAG73945.1"/>
    <property type="molecule type" value="Genomic_DNA"/>
</dbReference>
<dbReference type="RefSeq" id="WP_011092632.1">
    <property type="nucleotide sequence ID" value="NC_004547.2"/>
</dbReference>
<dbReference type="SMR" id="Q6D8E0"/>
<dbReference type="STRING" id="218491.ECA1034"/>
<dbReference type="GeneID" id="57207863"/>
<dbReference type="KEGG" id="eca:ECA1034"/>
<dbReference type="PATRIC" id="fig|218491.5.peg.1042"/>
<dbReference type="eggNOG" id="COG0233">
    <property type="taxonomic scope" value="Bacteria"/>
</dbReference>
<dbReference type="HOGENOM" id="CLU_073981_2_0_6"/>
<dbReference type="OrthoDB" id="9804006at2"/>
<dbReference type="Proteomes" id="UP000007966">
    <property type="component" value="Chromosome"/>
</dbReference>
<dbReference type="GO" id="GO:0005829">
    <property type="term" value="C:cytosol"/>
    <property type="evidence" value="ECO:0007669"/>
    <property type="project" value="GOC"/>
</dbReference>
<dbReference type="GO" id="GO:0043023">
    <property type="term" value="F:ribosomal large subunit binding"/>
    <property type="evidence" value="ECO:0007669"/>
    <property type="project" value="TreeGrafter"/>
</dbReference>
<dbReference type="GO" id="GO:0002184">
    <property type="term" value="P:cytoplasmic translational termination"/>
    <property type="evidence" value="ECO:0007669"/>
    <property type="project" value="TreeGrafter"/>
</dbReference>
<dbReference type="CDD" id="cd00520">
    <property type="entry name" value="RRF"/>
    <property type="match status" value="1"/>
</dbReference>
<dbReference type="FunFam" id="1.10.132.20:FF:000001">
    <property type="entry name" value="Ribosome-recycling factor"/>
    <property type="match status" value="1"/>
</dbReference>
<dbReference type="FunFam" id="3.30.1360.40:FF:000001">
    <property type="entry name" value="Ribosome-recycling factor"/>
    <property type="match status" value="1"/>
</dbReference>
<dbReference type="Gene3D" id="3.30.1360.40">
    <property type="match status" value="1"/>
</dbReference>
<dbReference type="Gene3D" id="1.10.132.20">
    <property type="entry name" value="Ribosome-recycling factor"/>
    <property type="match status" value="1"/>
</dbReference>
<dbReference type="HAMAP" id="MF_00040">
    <property type="entry name" value="RRF"/>
    <property type="match status" value="1"/>
</dbReference>
<dbReference type="InterPro" id="IPR002661">
    <property type="entry name" value="Ribosome_recyc_fac"/>
</dbReference>
<dbReference type="InterPro" id="IPR023584">
    <property type="entry name" value="Ribosome_recyc_fac_dom"/>
</dbReference>
<dbReference type="InterPro" id="IPR036191">
    <property type="entry name" value="RRF_sf"/>
</dbReference>
<dbReference type="NCBIfam" id="TIGR00496">
    <property type="entry name" value="frr"/>
    <property type="match status" value="1"/>
</dbReference>
<dbReference type="PANTHER" id="PTHR20982:SF3">
    <property type="entry name" value="MITOCHONDRIAL RIBOSOME RECYCLING FACTOR PSEUDO 1"/>
    <property type="match status" value="1"/>
</dbReference>
<dbReference type="PANTHER" id="PTHR20982">
    <property type="entry name" value="RIBOSOME RECYCLING FACTOR"/>
    <property type="match status" value="1"/>
</dbReference>
<dbReference type="Pfam" id="PF01765">
    <property type="entry name" value="RRF"/>
    <property type="match status" value="1"/>
</dbReference>
<dbReference type="SUPFAM" id="SSF55194">
    <property type="entry name" value="Ribosome recycling factor, RRF"/>
    <property type="match status" value="1"/>
</dbReference>
<evidence type="ECO:0000255" key="1">
    <source>
        <dbReference type="HAMAP-Rule" id="MF_00040"/>
    </source>
</evidence>
<organism>
    <name type="scientific">Pectobacterium atrosepticum (strain SCRI 1043 / ATCC BAA-672)</name>
    <name type="common">Erwinia carotovora subsp. atroseptica</name>
    <dbReference type="NCBI Taxonomy" id="218491"/>
    <lineage>
        <taxon>Bacteria</taxon>
        <taxon>Pseudomonadati</taxon>
        <taxon>Pseudomonadota</taxon>
        <taxon>Gammaproteobacteria</taxon>
        <taxon>Enterobacterales</taxon>
        <taxon>Pectobacteriaceae</taxon>
        <taxon>Pectobacterium</taxon>
    </lineage>
</organism>
<comment type="function">
    <text evidence="1">Responsible for the release of ribosomes from messenger RNA at the termination of protein biosynthesis. May increase the efficiency of translation by recycling ribosomes from one round of translation to another.</text>
</comment>
<comment type="subcellular location">
    <subcellularLocation>
        <location evidence="1">Cytoplasm</location>
    </subcellularLocation>
</comment>
<comment type="similarity">
    <text evidence="1">Belongs to the RRF family.</text>
</comment>
<feature type="chain" id="PRO_0000167460" description="Ribosome-recycling factor">
    <location>
        <begin position="1"/>
        <end position="185"/>
    </location>
</feature>
<gene>
    <name evidence="1" type="primary">frr</name>
    <name type="ordered locus">ECA1034</name>
</gene>
<name>RRF_PECAS</name>
<keyword id="KW-0963">Cytoplasm</keyword>
<keyword id="KW-0648">Protein biosynthesis</keyword>
<keyword id="KW-1185">Reference proteome</keyword>
<sequence length="185" mass="20780">MTNEIRKDAETRMDKCVEAFKNQINRIRTGRASPSILDGIHVEYYGSATPLRQLANVVVEDSRTLAISVFDRSLSPAVEKAIMASDLGLNPSSAGTVIRVPLPPLTEERRKDLIKVVRGEAEQGRISVRNVRRDANDKFKALLKDKAISEDEERRAQDDVQKLTDNFIKKVDVALAEKEAELMEF</sequence>
<proteinExistence type="inferred from homology"/>